<name>RING1_BPCA1</name>
<sequence>MVNNINWVKLPVILDRLLRHPLLTDLNLETAIQYTLDFISAMGLPNVYVDKIETIDIKEYRGELPCDLISINQVRLHKNGIALRAMTDNFNAYPTHDHKEGDWYERGEPSFKTQGRVIFTSIKHEKVDISYKAIMLDDEGLPLIPDNPIFLKTLELYIKKEWFTILFDMGKISPAVLNNTQQEYAFKAGQCNNEFVIPSVSEMEAITNMWNQLIPRVTEFRRGFKNLGDKEYIRVH</sequence>
<comment type="function">
    <text evidence="1">Forms the tail multi-ring barrel with ring protein 2, ring protein 3 and ring protein 4.</text>
</comment>
<comment type="subunit">
    <text evidence="1">Homododecamer.</text>
</comment>
<comment type="subcellular location">
    <subcellularLocation>
        <location evidence="1">Virion</location>
    </subcellularLocation>
    <text evidence="1">Present in 12 copies in the virion tail (PubMed:37138077). Ring 1 is located at the portal end of the tail (PubMed:37138077).</text>
</comment>
<comment type="miscellaneous">
    <text evidence="1 4">The barrel is composed of five stacked dodecameric ring structures (Probable) (PubMed:37138077). Podoviridae-like phages usually possess only one such ring (Probable). The tail is thus rather long (PubMed:37138077).</text>
</comment>
<evidence type="ECO:0000269" key="1">
    <source>
    </source>
</evidence>
<evidence type="ECO:0000303" key="2">
    <source>
    </source>
</evidence>
<evidence type="ECO:0000303" key="3">
    <source>
    </source>
</evidence>
<evidence type="ECO:0000305" key="4">
    <source>
    </source>
</evidence>
<evidence type="ECO:0000312" key="5">
    <source>
        <dbReference type="EMBL" id="AXQ62686.1"/>
    </source>
</evidence>
<evidence type="ECO:0007829" key="6">
    <source>
        <dbReference type="PDB" id="7QOG"/>
    </source>
</evidence>
<evidence type="ECO:0007829" key="7">
    <source>
        <dbReference type="PDB" id="7QOJ"/>
    </source>
</evidence>
<proteinExistence type="evidence at protein level"/>
<keyword id="KW-0002">3D-structure</keyword>
<keyword id="KW-1185">Reference proteome</keyword>
<keyword id="KW-1227">Viral tail protein</keyword>
<keyword id="KW-0946">Virion</keyword>
<gene>
    <name evidence="5" type="ORF">crAss001_43</name>
</gene>
<accession>A0A385DT91</accession>
<organismHost>
    <name type="scientific">Bacteroides intestinalis</name>
    <dbReference type="NCBI Taxonomy" id="329854"/>
</organismHost>
<feature type="chain" id="PRO_0000458030" description="Ring protein 1">
    <location>
        <begin position="1"/>
        <end position="236"/>
    </location>
</feature>
<feature type="strand" evidence="6">
    <location>
        <begin position="7"/>
        <end position="9"/>
    </location>
</feature>
<feature type="helix" evidence="6">
    <location>
        <begin position="12"/>
        <end position="17"/>
    </location>
</feature>
<feature type="helix" evidence="7">
    <location>
        <begin position="21"/>
        <end position="23"/>
    </location>
</feature>
<feature type="helix" evidence="6">
    <location>
        <begin position="28"/>
        <end position="42"/>
    </location>
</feature>
<feature type="strand" evidence="6">
    <location>
        <begin position="47"/>
        <end position="63"/>
    </location>
</feature>
<feature type="strand" evidence="6">
    <location>
        <begin position="70"/>
        <end position="76"/>
    </location>
</feature>
<feature type="turn" evidence="6">
    <location>
        <begin position="77"/>
        <end position="79"/>
    </location>
</feature>
<feature type="strand" evidence="7">
    <location>
        <begin position="89"/>
        <end position="92"/>
    </location>
</feature>
<feature type="strand" evidence="6">
    <location>
        <begin position="111"/>
        <end position="121"/>
    </location>
</feature>
<feature type="strand" evidence="6">
    <location>
        <begin position="123"/>
        <end position="133"/>
    </location>
</feature>
<feature type="strand" evidence="6">
    <location>
        <begin position="138"/>
        <end position="145"/>
    </location>
</feature>
<feature type="helix" evidence="6">
    <location>
        <begin position="148"/>
        <end position="169"/>
    </location>
</feature>
<feature type="helix" evidence="6">
    <location>
        <begin position="174"/>
        <end position="196"/>
    </location>
</feature>
<feature type="helix" evidence="6">
    <location>
        <begin position="200"/>
        <end position="210"/>
    </location>
</feature>
<feature type="turn" evidence="6">
    <location>
        <begin position="219"/>
        <end position="223"/>
    </location>
</feature>
<feature type="turn" evidence="7">
    <location>
        <begin position="225"/>
        <end position="228"/>
    </location>
</feature>
<dbReference type="EMBL" id="MH675552">
    <property type="protein sequence ID" value="AXQ62686.1"/>
    <property type="molecule type" value="Genomic_DNA"/>
</dbReference>
<dbReference type="PDB" id="7QOG">
    <property type="method" value="EM"/>
    <property type="resolution" value="3.09 A"/>
    <property type="chains" value="B=1-236"/>
</dbReference>
<dbReference type="PDB" id="7QOI">
    <property type="method" value="EM"/>
    <property type="resolution" value="3.62 A"/>
    <property type="chains" value="FM/FN/FO/FP/FQ/FR/FS/FT/FU/FV/FW/FX=1-236"/>
</dbReference>
<dbReference type="PDB" id="7QOJ">
    <property type="method" value="EM"/>
    <property type="resolution" value="3.21 A"/>
    <property type="chains" value="B=1-236"/>
</dbReference>
<dbReference type="PDB" id="7QOL">
    <property type="method" value="EM"/>
    <property type="resolution" value="3.33 A"/>
    <property type="chains" value="B/Q=1-236"/>
</dbReference>
<dbReference type="PDB" id="8CKB">
    <property type="method" value="EM"/>
    <property type="resolution" value="4.39 A"/>
    <property type="chains" value="J001/J002/J003/J004/J005/J006/J007/J008/J009/J010/RP1011/RP1012=1-236"/>
</dbReference>
<dbReference type="PDBsum" id="7QOG"/>
<dbReference type="PDBsum" id="7QOI"/>
<dbReference type="PDBsum" id="7QOJ"/>
<dbReference type="PDBsum" id="7QOL"/>
<dbReference type="PDBsum" id="8CKB"/>
<dbReference type="EMDB" id="EMD-14089"/>
<dbReference type="EMDB" id="EMD-14091"/>
<dbReference type="EMDB" id="EMD-14092"/>
<dbReference type="EMDB" id="EMD-14094"/>
<dbReference type="SMR" id="A0A385DT91"/>
<dbReference type="Proteomes" id="UP000262320">
    <property type="component" value="Genome"/>
</dbReference>
<dbReference type="GO" id="GO:0098015">
    <property type="term" value="C:virus tail"/>
    <property type="evidence" value="ECO:0007669"/>
    <property type="project" value="UniProtKB-KW"/>
</dbReference>
<dbReference type="Pfam" id="PF24228">
    <property type="entry name" value="CrAss_Ring_1"/>
    <property type="match status" value="1"/>
</dbReference>
<reference key="1">
    <citation type="journal article" date="2018" name="Nat. Commun.">
        <title>PhiCrAss001 represents the most abundant bacteriophage family in the human gut and infects Bacteroides intestinalis.</title>
        <authorList>
            <person name="Shkoporov A.N."/>
            <person name="Khokhlova E.V."/>
            <person name="Fitzgerald C.B."/>
            <person name="Stockdale S.R."/>
            <person name="Draper L.A."/>
            <person name="Ross R.P."/>
            <person name="Hill C."/>
        </authorList>
    </citation>
    <scope>NUCLEOTIDE SEQUENCE [LARGE SCALE GENOMIC DNA]</scope>
</reference>
<reference key="2">
    <citation type="journal article" date="2023" name="Nature">
        <title>Structural atlas of a human gut crassvirus.</title>
        <authorList>
            <person name="Bayfield O.W."/>
            <person name="Shkoporov A.N."/>
            <person name="Yutin N."/>
            <person name="Khokhlova E.V."/>
            <person name="Smith J.L.R."/>
            <person name="Hawkins D.E.D.P."/>
            <person name="Koonin E.V."/>
            <person name="Hill C."/>
            <person name="Antson A.A."/>
        </authorList>
    </citation>
    <scope>SUBCELLULAR LOCATION</scope>
    <scope>FUNCTION</scope>
    <scope>SUBUNIT</scope>
    <scope>INTERACTION WITH RING PROTEIN 2</scope>
</reference>
<protein>
    <recommendedName>
        <fullName evidence="3">Ring protein 1</fullName>
        <shortName evidence="3">R1</shortName>
    </recommendedName>
    <alternativeName>
        <fullName evidence="2">Gene product 43</fullName>
        <shortName evidence="2">gp43</shortName>
    </alternativeName>
</protein>
<organism>
    <name type="scientific">Bacteroides phage crAss001</name>
    <name type="common">Bacteroides phage PhiCrAss001</name>
    <dbReference type="NCBI Taxonomy" id="2301731"/>
    <lineage>
        <taxon>Viruses</taxon>
        <taxon>Duplodnaviria</taxon>
        <taxon>Heunggongvirae</taxon>
        <taxon>Uroviricota</taxon>
        <taxon>Caudoviricetes</taxon>
        <taxon>Crassvirales</taxon>
        <taxon>Steigviridae</taxon>
        <taxon>Asinivirinae</taxon>
        <taxon>Kehishuvirus</taxon>
        <taxon>Kehishuvirus primarius</taxon>
    </lineage>
</organism>